<dbReference type="EC" id="1.1.1.49" evidence="2"/>
<dbReference type="EMBL" id="X07467">
    <property type="protein sequence ID" value="CAA30355.1"/>
    <property type="molecule type" value="mRNA"/>
</dbReference>
<dbReference type="EMBL" id="BC081820">
    <property type="protein sequence ID" value="AAH81820.1"/>
    <property type="molecule type" value="mRNA"/>
</dbReference>
<dbReference type="EMBL" id="M26655">
    <property type="protein sequence ID" value="AAA41179.1"/>
    <property type="molecule type" value="Genomic_DNA"/>
</dbReference>
<dbReference type="EMBL" id="M26653">
    <property type="protein sequence ID" value="AAA41179.1"/>
    <property type="status" value="JOINED"/>
    <property type="molecule type" value="Genomic_DNA"/>
</dbReference>
<dbReference type="EMBL" id="M26654">
    <property type="protein sequence ID" value="AAA41179.1"/>
    <property type="status" value="JOINED"/>
    <property type="molecule type" value="Genomic_DNA"/>
</dbReference>
<dbReference type="PIR" id="S01233">
    <property type="entry name" value="S01233"/>
</dbReference>
<dbReference type="RefSeq" id="NP_058702.1">
    <property type="nucleotide sequence ID" value="NM_017006.2"/>
</dbReference>
<dbReference type="SMR" id="P05370"/>
<dbReference type="BioGRID" id="246548">
    <property type="interactions" value="2"/>
</dbReference>
<dbReference type="FunCoup" id="P05370">
    <property type="interactions" value="2214"/>
</dbReference>
<dbReference type="IntAct" id="P05370">
    <property type="interactions" value="4"/>
</dbReference>
<dbReference type="STRING" id="10116.ENSRNOP00000075297"/>
<dbReference type="BindingDB" id="P05370"/>
<dbReference type="ChEMBL" id="CHEMBL5169110"/>
<dbReference type="GlyGen" id="P05370">
    <property type="glycosylation" value="2 sites, 1 O-linked glycan (1 site)"/>
</dbReference>
<dbReference type="iPTMnet" id="P05370"/>
<dbReference type="PhosphoSitePlus" id="P05370"/>
<dbReference type="jPOST" id="P05370"/>
<dbReference type="PaxDb" id="10116-ENSRNOP00000053157"/>
<dbReference type="Ensembl" id="ENSRNOT00000080887.2">
    <property type="protein sequence ID" value="ENSRNOP00000075297.1"/>
    <property type="gene ID" value="ENSRNOG00000056728.2"/>
</dbReference>
<dbReference type="GeneID" id="24377"/>
<dbReference type="KEGG" id="rno:24377"/>
<dbReference type="AGR" id="RGD:2645"/>
<dbReference type="CTD" id="2539"/>
<dbReference type="RGD" id="2645">
    <property type="gene designation" value="G6pdx"/>
</dbReference>
<dbReference type="eggNOG" id="KOG0563">
    <property type="taxonomic scope" value="Eukaryota"/>
</dbReference>
<dbReference type="GeneTree" id="ENSGT00530000063435"/>
<dbReference type="HOGENOM" id="CLU_013524_2_3_1"/>
<dbReference type="InParanoid" id="P05370"/>
<dbReference type="OMA" id="ERAGYYE"/>
<dbReference type="OrthoDB" id="60984at2759"/>
<dbReference type="PhylomeDB" id="P05370"/>
<dbReference type="TreeFam" id="TF300584"/>
<dbReference type="BRENDA" id="1.1.1.49">
    <property type="organism ID" value="5301"/>
</dbReference>
<dbReference type="Reactome" id="R-RNO-5628897">
    <property type="pathway name" value="TP53 Regulates Metabolic Genes"/>
</dbReference>
<dbReference type="Reactome" id="R-RNO-71336">
    <property type="pathway name" value="Pentose phosphate pathway"/>
</dbReference>
<dbReference type="SABIO-RK" id="P05370"/>
<dbReference type="UniPathway" id="UPA00115">
    <property type="reaction ID" value="UER00408"/>
</dbReference>
<dbReference type="PRO" id="PR:P05370"/>
<dbReference type="Proteomes" id="UP000002494">
    <property type="component" value="Chromosome X"/>
</dbReference>
<dbReference type="Bgee" id="ENSRNOG00000056728">
    <property type="expression patterns" value="Expressed in ovary and 20 other cell types or tissues"/>
</dbReference>
<dbReference type="GO" id="GO:0034451">
    <property type="term" value="C:centriolar satellite"/>
    <property type="evidence" value="ECO:0007669"/>
    <property type="project" value="Ensembl"/>
</dbReference>
<dbReference type="GO" id="GO:0009898">
    <property type="term" value="C:cytoplasmic side of plasma membrane"/>
    <property type="evidence" value="ECO:0000266"/>
    <property type="project" value="RGD"/>
</dbReference>
<dbReference type="GO" id="GO:0005829">
    <property type="term" value="C:cytosol"/>
    <property type="evidence" value="ECO:0000266"/>
    <property type="project" value="RGD"/>
</dbReference>
<dbReference type="GO" id="GO:0043231">
    <property type="term" value="C:intracellular membrane-bounded organelle"/>
    <property type="evidence" value="ECO:0007669"/>
    <property type="project" value="Ensembl"/>
</dbReference>
<dbReference type="GO" id="GO:0030246">
    <property type="term" value="F:carbohydrate binding"/>
    <property type="evidence" value="ECO:0000314"/>
    <property type="project" value="RGD"/>
</dbReference>
<dbReference type="GO" id="GO:0005536">
    <property type="term" value="F:D-glucose binding"/>
    <property type="evidence" value="ECO:0000314"/>
    <property type="project" value="RGD"/>
</dbReference>
<dbReference type="GO" id="GO:0004345">
    <property type="term" value="F:glucose-6-phosphate dehydrogenase activity"/>
    <property type="evidence" value="ECO:0000314"/>
    <property type="project" value="CACAO"/>
</dbReference>
<dbReference type="GO" id="GO:0042802">
    <property type="term" value="F:identical protein binding"/>
    <property type="evidence" value="ECO:0000266"/>
    <property type="project" value="RGD"/>
</dbReference>
<dbReference type="GO" id="GO:0050661">
    <property type="term" value="F:NADP binding"/>
    <property type="evidence" value="ECO:0000314"/>
    <property type="project" value="RGD"/>
</dbReference>
<dbReference type="GO" id="GO:0042803">
    <property type="term" value="F:protein homodimerization activity"/>
    <property type="evidence" value="ECO:0000266"/>
    <property type="project" value="RGD"/>
</dbReference>
<dbReference type="GO" id="GO:0001998">
    <property type="term" value="P:angiotensin-mediated vasoconstriction involved in regulation of systemic arterial blood pressure"/>
    <property type="evidence" value="ECO:0000266"/>
    <property type="project" value="RGD"/>
</dbReference>
<dbReference type="GO" id="GO:0002033">
    <property type="term" value="P:angiotensin-mediated vasodilation involved in regulation of systemic arterial blood pressure"/>
    <property type="evidence" value="ECO:0000266"/>
    <property type="project" value="RGD"/>
</dbReference>
<dbReference type="GO" id="GO:0034599">
    <property type="term" value="P:cellular response to oxidative stress"/>
    <property type="evidence" value="ECO:0000266"/>
    <property type="project" value="RGD"/>
</dbReference>
<dbReference type="GO" id="GO:0006695">
    <property type="term" value="P:cholesterol biosynthetic process"/>
    <property type="evidence" value="ECO:0000266"/>
    <property type="project" value="RGD"/>
</dbReference>
<dbReference type="GO" id="GO:0048821">
    <property type="term" value="P:erythrocyte development"/>
    <property type="evidence" value="ECO:0000266"/>
    <property type="project" value="RGD"/>
</dbReference>
<dbReference type="GO" id="GO:0043249">
    <property type="term" value="P:erythrocyte maturation"/>
    <property type="evidence" value="ECO:0000266"/>
    <property type="project" value="RGD"/>
</dbReference>
<dbReference type="GO" id="GO:0051156">
    <property type="term" value="P:glucose 6-phosphate metabolic process"/>
    <property type="evidence" value="ECO:0000314"/>
    <property type="project" value="RGD"/>
</dbReference>
<dbReference type="GO" id="GO:0006006">
    <property type="term" value="P:glucose metabolic process"/>
    <property type="evidence" value="ECO:0000318"/>
    <property type="project" value="GO_Central"/>
</dbReference>
<dbReference type="GO" id="GO:0006749">
    <property type="term" value="P:glutathione metabolic process"/>
    <property type="evidence" value="ECO:0000266"/>
    <property type="project" value="RGD"/>
</dbReference>
<dbReference type="GO" id="GO:0006741">
    <property type="term" value="P:NADP biosynthetic process"/>
    <property type="evidence" value="ECO:0000266"/>
    <property type="project" value="RGD"/>
</dbReference>
<dbReference type="GO" id="GO:0006739">
    <property type="term" value="P:NADP metabolic process"/>
    <property type="evidence" value="ECO:0000250"/>
    <property type="project" value="UniProtKB"/>
</dbReference>
<dbReference type="GO" id="GO:0006740">
    <property type="term" value="P:NADPH regeneration"/>
    <property type="evidence" value="ECO:0000266"/>
    <property type="project" value="RGD"/>
</dbReference>
<dbReference type="GO" id="GO:0061052">
    <property type="term" value="P:negative regulation of cell growth involved in cardiac muscle cell development"/>
    <property type="evidence" value="ECO:0000315"/>
    <property type="project" value="RGD"/>
</dbReference>
<dbReference type="GO" id="GO:2000378">
    <property type="term" value="P:negative regulation of reactive oxygen species metabolic process"/>
    <property type="evidence" value="ECO:0000315"/>
    <property type="project" value="RGD"/>
</dbReference>
<dbReference type="GO" id="GO:0019322">
    <property type="term" value="P:pentose biosynthetic process"/>
    <property type="evidence" value="ECO:0000266"/>
    <property type="project" value="RGD"/>
</dbReference>
<dbReference type="GO" id="GO:0006098">
    <property type="term" value="P:pentose-phosphate shunt"/>
    <property type="evidence" value="ECO:0000314"/>
    <property type="project" value="RGD"/>
</dbReference>
<dbReference type="GO" id="GO:0009051">
    <property type="term" value="P:pentose-phosphate shunt, oxidative branch"/>
    <property type="evidence" value="ECO:0000315"/>
    <property type="project" value="RGD"/>
</dbReference>
<dbReference type="GO" id="GO:1904879">
    <property type="term" value="P:positive regulation of calcium ion transmembrane transport via high voltage-gated calcium channel"/>
    <property type="evidence" value="ECO:0000315"/>
    <property type="project" value="RGD"/>
</dbReference>
<dbReference type="GO" id="GO:0040014">
    <property type="term" value="P:regulation of multicellular organism growth"/>
    <property type="evidence" value="ECO:0000266"/>
    <property type="project" value="RGD"/>
</dbReference>
<dbReference type="GO" id="GO:0043523">
    <property type="term" value="P:regulation of neuron apoptotic process"/>
    <property type="evidence" value="ECO:0000314"/>
    <property type="project" value="RGD"/>
</dbReference>
<dbReference type="GO" id="GO:0045471">
    <property type="term" value="P:response to ethanol"/>
    <property type="evidence" value="ECO:0000314"/>
    <property type="project" value="RGD"/>
</dbReference>
<dbReference type="GO" id="GO:0032094">
    <property type="term" value="P:response to food"/>
    <property type="evidence" value="ECO:0000270"/>
    <property type="project" value="RGD"/>
</dbReference>
<dbReference type="GO" id="GO:0010041">
    <property type="term" value="P:response to iron(III) ion"/>
    <property type="evidence" value="ECO:0000270"/>
    <property type="project" value="RGD"/>
</dbReference>
<dbReference type="GO" id="GO:0006979">
    <property type="term" value="P:response to oxidative stress"/>
    <property type="evidence" value="ECO:0000266"/>
    <property type="project" value="RGD"/>
</dbReference>
<dbReference type="GO" id="GO:0046390">
    <property type="term" value="P:ribose phosphate biosynthetic process"/>
    <property type="evidence" value="ECO:0000266"/>
    <property type="project" value="RGD"/>
</dbReference>
<dbReference type="FunFam" id="3.30.360.10:FF:000013">
    <property type="entry name" value="Glucose-6-phosphate 1-dehydrogenase"/>
    <property type="match status" value="1"/>
</dbReference>
<dbReference type="FunFam" id="3.40.50.720:FF:000111">
    <property type="entry name" value="Glucose-6-phosphate 1-dehydrogenase"/>
    <property type="match status" value="1"/>
</dbReference>
<dbReference type="Gene3D" id="3.30.360.10">
    <property type="entry name" value="Dihydrodipicolinate Reductase, domain 2"/>
    <property type="match status" value="1"/>
</dbReference>
<dbReference type="Gene3D" id="3.40.50.720">
    <property type="entry name" value="NAD(P)-binding Rossmann-like Domain"/>
    <property type="match status" value="1"/>
</dbReference>
<dbReference type="HAMAP" id="MF_00966">
    <property type="entry name" value="G6PD"/>
    <property type="match status" value="1"/>
</dbReference>
<dbReference type="InterPro" id="IPR001282">
    <property type="entry name" value="G6P_DH"/>
</dbReference>
<dbReference type="InterPro" id="IPR019796">
    <property type="entry name" value="G6P_DH_AS"/>
</dbReference>
<dbReference type="InterPro" id="IPR022675">
    <property type="entry name" value="G6P_DH_C"/>
</dbReference>
<dbReference type="InterPro" id="IPR022674">
    <property type="entry name" value="G6P_DH_NAD-bd"/>
</dbReference>
<dbReference type="InterPro" id="IPR036291">
    <property type="entry name" value="NAD(P)-bd_dom_sf"/>
</dbReference>
<dbReference type="NCBIfam" id="TIGR00871">
    <property type="entry name" value="zwf"/>
    <property type="match status" value="1"/>
</dbReference>
<dbReference type="PANTHER" id="PTHR23429:SF0">
    <property type="entry name" value="GLUCOSE-6-PHOSPHATE 1-DEHYDROGENASE"/>
    <property type="match status" value="1"/>
</dbReference>
<dbReference type="PANTHER" id="PTHR23429">
    <property type="entry name" value="GLUCOSE-6-PHOSPHATE 1-DEHYDROGENASE G6PD"/>
    <property type="match status" value="1"/>
</dbReference>
<dbReference type="Pfam" id="PF02781">
    <property type="entry name" value="G6PD_C"/>
    <property type="match status" value="1"/>
</dbReference>
<dbReference type="Pfam" id="PF00479">
    <property type="entry name" value="G6PD_N"/>
    <property type="match status" value="1"/>
</dbReference>
<dbReference type="PIRSF" id="PIRSF000110">
    <property type="entry name" value="G6PD"/>
    <property type="match status" value="1"/>
</dbReference>
<dbReference type="PRINTS" id="PR00079">
    <property type="entry name" value="G6PDHDRGNASE"/>
</dbReference>
<dbReference type="SUPFAM" id="SSF55347">
    <property type="entry name" value="Glyceraldehyde-3-phosphate dehydrogenase-like, C-terminal domain"/>
    <property type="match status" value="1"/>
</dbReference>
<dbReference type="SUPFAM" id="SSF51735">
    <property type="entry name" value="NAD(P)-binding Rossmann-fold domains"/>
    <property type="match status" value="1"/>
</dbReference>
<dbReference type="PROSITE" id="PS00069">
    <property type="entry name" value="G6P_DEHYDROGENASE"/>
    <property type="match status" value="1"/>
</dbReference>
<accession>P05370</accession>
<reference key="1">
    <citation type="journal article" date="1988" name="Nucleic Acids Res.">
        <title>Cloning and sequence of a cDNA encoding rat glucose-6-phosphate dehydrogenase.</title>
        <authorList>
            <person name="Ho Y."/>
            <person name="Howard A.J."/>
            <person name="Crapo J.D."/>
        </authorList>
    </citation>
    <scope>NUCLEOTIDE SEQUENCE [MRNA]</scope>
    <source>
        <strain>Sprague-Dawley</strain>
        <tissue>Liver</tissue>
    </source>
</reference>
<reference key="2">
    <citation type="journal article" date="2004" name="Genome Res.">
        <title>The status, quality, and expansion of the NIH full-length cDNA project: the Mammalian Gene Collection (MGC).</title>
        <authorList>
            <consortium name="The MGC Project Team"/>
        </authorList>
    </citation>
    <scope>NUCLEOTIDE SEQUENCE [LARGE SCALE MRNA]</scope>
    <source>
        <tissue>Kidney</tissue>
    </source>
</reference>
<reference key="3">
    <citation type="journal article" date="1989" name="Eur. J. Biochem.">
        <title>Glucose-6-phosphate dehydrogenase. Characteristics revealed by the rat liver enzyme structure.</title>
        <authorList>
            <person name="Jeffery J."/>
            <person name="Barros-Soederling J."/>
            <person name="Murray L."/>
            <person name="Wood I."/>
            <person name="Hansen R."/>
            <person name="Szepesi B."/>
            <person name="Joernvall H."/>
        </authorList>
    </citation>
    <scope>PROTEIN SEQUENCE OF 2-514</scope>
    <scope>CLEAVAGE OF INITIATOR METHIONINE</scope>
    <scope>ACETYLATION AT ALA-2</scope>
    <source>
        <strain>Wistar</strain>
        <tissue>Liver</tissue>
    </source>
</reference>
<reference key="4">
    <citation type="submission" date="1989-11" db="EMBL/GenBank/DDBJ databases">
        <authorList>
            <person name="Fritz R.S."/>
            <person name="Kletzien R.F."/>
        </authorList>
    </citation>
    <scope>NUCLEOTIDE SEQUENCE [GENOMIC DNA] OF 41-515</scope>
</reference>
<reference key="5">
    <citation type="submission" date="2006-11" db="UniProtKB">
        <authorList>
            <person name="Lubec G."/>
            <person name="Afjehi-Sadat L."/>
        </authorList>
    </citation>
    <scope>PROTEIN SEQUENCE OF 58-72; 176-192 AND 228-257</scope>
    <scope>IDENTIFICATION BY MASS SPECTROMETRY</scope>
    <source>
        <strain>Sprague-Dawley</strain>
        <tissue>Spinal cord</tissue>
    </source>
</reference>
<keyword id="KW-0007">Acetylation</keyword>
<keyword id="KW-0119">Carbohydrate metabolism</keyword>
<keyword id="KW-0963">Cytoplasm</keyword>
<keyword id="KW-0903">Direct protein sequencing</keyword>
<keyword id="KW-0313">Glucose metabolism</keyword>
<keyword id="KW-0379">Hydroxylation</keyword>
<keyword id="KW-0472">Membrane</keyword>
<keyword id="KW-0521">NADP</keyword>
<keyword id="KW-0560">Oxidoreductase</keyword>
<keyword id="KW-0597">Phosphoprotein</keyword>
<keyword id="KW-1185">Reference proteome</keyword>
<feature type="initiator methionine" description="Removed" evidence="3">
    <location>
        <position position="1"/>
    </location>
</feature>
<feature type="chain" id="PRO_0000068087" description="Glucose-6-phosphate 1-dehydrogenase">
    <location>
        <begin position="2"/>
        <end position="515"/>
    </location>
</feature>
<feature type="active site" description="Proton acceptor" evidence="1">
    <location>
        <position position="263"/>
    </location>
</feature>
<feature type="binding site" evidence="2">
    <location>
        <begin position="38"/>
        <end position="45"/>
    </location>
    <ligand>
        <name>NADP(+)</name>
        <dbReference type="ChEBI" id="CHEBI:58349"/>
        <label>1</label>
    </ligand>
</feature>
<feature type="binding site" evidence="2">
    <location>
        <position position="72"/>
    </location>
    <ligand>
        <name>NADP(+)</name>
        <dbReference type="ChEBI" id="CHEBI:58349"/>
        <label>1</label>
    </ligand>
</feature>
<feature type="binding site" evidence="2">
    <location>
        <position position="147"/>
    </location>
    <ligand>
        <name>NADP(+)</name>
        <dbReference type="ChEBI" id="CHEBI:58349"/>
        <label>1</label>
    </ligand>
</feature>
<feature type="binding site" evidence="2">
    <location>
        <position position="171"/>
    </location>
    <ligand>
        <name>D-glucose 6-phosphate</name>
        <dbReference type="ChEBI" id="CHEBI:61548"/>
    </ligand>
</feature>
<feature type="binding site" evidence="2">
    <location>
        <position position="171"/>
    </location>
    <ligand>
        <name>NADP(+)</name>
        <dbReference type="ChEBI" id="CHEBI:58349"/>
        <label>1</label>
    </ligand>
</feature>
<feature type="binding site" evidence="2">
    <location>
        <begin position="201"/>
        <end position="205"/>
    </location>
    <ligand>
        <name>D-glucose 6-phosphate</name>
        <dbReference type="ChEBI" id="CHEBI:61548"/>
    </ligand>
</feature>
<feature type="binding site" evidence="2">
    <location>
        <position position="239"/>
    </location>
    <ligand>
        <name>D-glucose 6-phosphate</name>
        <dbReference type="ChEBI" id="CHEBI:61548"/>
    </ligand>
</feature>
<feature type="binding site" evidence="2">
    <location>
        <position position="258"/>
    </location>
    <ligand>
        <name>D-glucose 6-phosphate</name>
        <dbReference type="ChEBI" id="CHEBI:61548"/>
    </ligand>
</feature>
<feature type="binding site" evidence="2">
    <location>
        <position position="357"/>
    </location>
    <ligand>
        <name>NADP(+)</name>
        <dbReference type="ChEBI" id="CHEBI:58349"/>
        <label>2</label>
    </ligand>
</feature>
<feature type="binding site" evidence="2">
    <location>
        <position position="360"/>
    </location>
    <ligand>
        <name>D-glucose 6-phosphate</name>
        <dbReference type="ChEBI" id="CHEBI:61548"/>
    </ligand>
</feature>
<feature type="binding site" evidence="2">
    <location>
        <position position="365"/>
    </location>
    <ligand>
        <name>D-glucose 6-phosphate</name>
        <dbReference type="ChEBI" id="CHEBI:61548"/>
    </ligand>
</feature>
<feature type="binding site" evidence="2">
    <location>
        <position position="366"/>
    </location>
    <ligand>
        <name>NADP(+)</name>
        <dbReference type="ChEBI" id="CHEBI:58349"/>
        <label>2</label>
    </ligand>
</feature>
<feature type="binding site" evidence="2">
    <location>
        <position position="370"/>
    </location>
    <ligand>
        <name>NADP(+)</name>
        <dbReference type="ChEBI" id="CHEBI:58349"/>
        <label>2</label>
    </ligand>
</feature>
<feature type="binding site" evidence="2">
    <location>
        <position position="393"/>
    </location>
    <ligand>
        <name>NADP(+)</name>
        <dbReference type="ChEBI" id="CHEBI:58349"/>
        <label>2</label>
    </ligand>
</feature>
<feature type="binding site" evidence="2">
    <location>
        <position position="395"/>
    </location>
    <ligand>
        <name>D-glucose 6-phosphate</name>
        <dbReference type="ChEBI" id="CHEBI:61548"/>
    </ligand>
</feature>
<feature type="binding site" evidence="2">
    <location>
        <begin position="401"/>
        <end position="403"/>
    </location>
    <ligand>
        <name>NADP(+)</name>
        <dbReference type="ChEBI" id="CHEBI:58349"/>
        <label>2</label>
    </ligand>
</feature>
<feature type="binding site" evidence="2">
    <location>
        <begin position="421"/>
        <end position="423"/>
    </location>
    <ligand>
        <name>NADP(+)</name>
        <dbReference type="ChEBI" id="CHEBI:58349"/>
        <label>2</label>
    </ligand>
</feature>
<feature type="binding site" evidence="2">
    <location>
        <position position="487"/>
    </location>
    <ligand>
        <name>NADP(+)</name>
        <dbReference type="ChEBI" id="CHEBI:58349"/>
        <label>2</label>
    </ligand>
</feature>
<feature type="binding site" evidence="2">
    <location>
        <position position="503"/>
    </location>
    <ligand>
        <name>NADP(+)</name>
        <dbReference type="ChEBI" id="CHEBI:58349"/>
        <label>2</label>
    </ligand>
</feature>
<feature type="binding site" evidence="2">
    <location>
        <position position="509"/>
    </location>
    <ligand>
        <name>NADP(+)</name>
        <dbReference type="ChEBI" id="CHEBI:58349"/>
        <label>2</label>
    </ligand>
</feature>
<feature type="modified residue" description="N-acetylalanine" evidence="3">
    <location>
        <position position="2"/>
    </location>
</feature>
<feature type="modified residue" description="Phosphoserine" evidence="2">
    <location>
        <position position="8"/>
    </location>
</feature>
<feature type="modified residue" description="Phosphothreonine" evidence="2">
    <location>
        <position position="10"/>
    </location>
</feature>
<feature type="modified residue" description="N6-acetyllysine" evidence="2">
    <location>
        <position position="89"/>
    </location>
</feature>
<feature type="modified residue" description="N6-(2-hydroxyisobutyryl)lysine; alternate" evidence="2">
    <location>
        <position position="171"/>
    </location>
</feature>
<feature type="modified residue" description="N6-acetyllysine; alternate" evidence="2">
    <location>
        <position position="171"/>
    </location>
</feature>
<feature type="modified residue" description="N6-acetyllysine" evidence="2">
    <location>
        <position position="403"/>
    </location>
</feature>
<feature type="modified residue" description="N6-acetyllysine" evidence="2">
    <location>
        <position position="432"/>
    </location>
</feature>
<feature type="modified residue" description="N6-acetyllysine" evidence="2">
    <location>
        <position position="497"/>
    </location>
</feature>
<feature type="modified residue" description="Phosphotyrosine" evidence="2">
    <location>
        <position position="503"/>
    </location>
</feature>
<feature type="sequence conflict" description="In Ref. 3; AA sequence." evidence="4" ref="3">
    <original>N</original>
    <variation>D</variation>
    <location>
        <position position="320"/>
    </location>
</feature>
<gene>
    <name type="primary">G6pdx</name>
    <name type="synonym">G6pd</name>
</gene>
<protein>
    <recommendedName>
        <fullName>Glucose-6-phosphate 1-dehydrogenase</fullName>
        <shortName>G6PD</shortName>
        <ecNumber evidence="2">1.1.1.49</ecNumber>
    </recommendedName>
</protein>
<name>G6PD_RAT</name>
<proteinExistence type="evidence at protein level"/>
<evidence type="ECO:0000250" key="1">
    <source>
        <dbReference type="UniProtKB" id="P11411"/>
    </source>
</evidence>
<evidence type="ECO:0000250" key="2">
    <source>
        <dbReference type="UniProtKB" id="P11413"/>
    </source>
</evidence>
<evidence type="ECO:0000269" key="3">
    <source>
    </source>
</evidence>
<evidence type="ECO:0000305" key="4"/>
<organism>
    <name type="scientific">Rattus norvegicus</name>
    <name type="common">Rat</name>
    <dbReference type="NCBI Taxonomy" id="10116"/>
    <lineage>
        <taxon>Eukaryota</taxon>
        <taxon>Metazoa</taxon>
        <taxon>Chordata</taxon>
        <taxon>Craniata</taxon>
        <taxon>Vertebrata</taxon>
        <taxon>Euteleostomi</taxon>
        <taxon>Mammalia</taxon>
        <taxon>Eutheria</taxon>
        <taxon>Euarchontoglires</taxon>
        <taxon>Glires</taxon>
        <taxon>Rodentia</taxon>
        <taxon>Myomorpha</taxon>
        <taxon>Muroidea</taxon>
        <taxon>Muridae</taxon>
        <taxon>Murinae</taxon>
        <taxon>Rattus</taxon>
    </lineage>
</organism>
<sequence>MAEQVALSRTQVCGILREELYQGDAFHQADTHIFIIMGASGDLAKKKIYPTIWWLFRDGLLPEDTFIVGYARSRLTVDDIRKQSEPFFKVTPEERPKLEEFFARNSYVAGQYDDPASYKHLNSHMNALHQGMQANRLFYLALPPTVYEAVTKNIQEICMSQTGWNRIIVEKPFGRDLQSSNQLSNHISSLFREDQIYRIDHYLGKEMVQNLMVLRFANRIFGPIWNRDNIACVILTFKEPFGTEGRGGYFDEFGIIRDVMQNHLLQMLCLVAMEKPASTDSDDVRDEKVKVLKCISEVETDNVVLGQYVGNPSGEGEATNGYLDDPTVPHGSTTATFAAAVLYVENERWDGVPFILRCGKALNERKAEVRLQFRDVAGDIFHQQCKRNELVIRVQPNEAVYTKMMTKKPGMFFNPEESELDLTYGNRYKNVKLPDAYERLILDVFCGSQMHFVRSDELREAWRIFTPLLHKIDREKPQPIPYVYGSRGPTEADELMKRVGFQYEGTYKWVNPHKL</sequence>
<comment type="function">
    <text evidence="2">Cytosolic glucose-6-phosphate dehydrogenase that catalyzes the first and rate-limiting step of the oxidative branch within the pentose phosphate pathway/shunt, an alternative route to glycolysis for the dissimilation of carbohydrates and a major source of reducing power and metabolic intermediates for fatty acid and nucleic acid biosynthetic processes.</text>
</comment>
<comment type="catalytic activity">
    <reaction evidence="2">
        <text>D-glucose 6-phosphate + NADP(+) = 6-phospho-D-glucono-1,5-lactone + NADPH + H(+)</text>
        <dbReference type="Rhea" id="RHEA:15841"/>
        <dbReference type="ChEBI" id="CHEBI:15378"/>
        <dbReference type="ChEBI" id="CHEBI:57783"/>
        <dbReference type="ChEBI" id="CHEBI:57955"/>
        <dbReference type="ChEBI" id="CHEBI:58349"/>
        <dbReference type="ChEBI" id="CHEBI:61548"/>
        <dbReference type="EC" id="1.1.1.49"/>
    </reaction>
    <physiologicalReaction direction="left-to-right" evidence="2">
        <dbReference type="Rhea" id="RHEA:15842"/>
    </physiologicalReaction>
</comment>
<comment type="pathway">
    <text evidence="2">Carbohydrate degradation; pentose phosphate pathway; D-ribulose 5-phosphate from D-glucose 6-phosphate (oxidative stage): step 1/3.</text>
</comment>
<comment type="subunit">
    <text evidence="2">Homotetramer; dimer of dimers. Interacts with SIRT2; the interaction is enhanced by H(2)O(2) treatment (By similarity). Forms a ternary complex with ALDOB and TP53; this interaction is direct. ALDOB stabilizes the complex inhibiting G6PD activity and keeping oxidative pentose phosphate metabolism in check.</text>
</comment>
<comment type="subcellular location">
    <subcellularLocation>
        <location evidence="2">Cytoplasm</location>
        <location evidence="2">Cytosol</location>
    </subcellularLocation>
    <subcellularLocation>
        <location evidence="2">Membrane</location>
        <topology evidence="2">Peripheral membrane protein</topology>
    </subcellularLocation>
</comment>
<comment type="PTM">
    <text evidence="2">Acetylated by ELP3 at Lys-403; acetylation inhibits its homodimerization and enzyme activity. Deacetylated by SIRT2 at Lys-403; deacetylation stimulates its enzyme activity (By similarity).</text>
</comment>
<comment type="miscellaneous">
    <text>Has NADP both as cofactor (bound to the N-terminal domain) and as structural element bound to the C-terminal domain.</text>
</comment>
<comment type="similarity">
    <text evidence="4">Belongs to the glucose-6-phosphate dehydrogenase family.</text>
</comment>